<sequence>MNKSKRLFTKSKRSFRRRLPPIQSGDRIDYRNMSLISRFISEQGKILSRRVNRVTLKQQRLITIAIKQARILSLLPFLNNQKQFERSESTPRTTSLRTRKK</sequence>
<name>RR18_NASOF</name>
<gene>
    <name evidence="1" type="primary">rps18</name>
</gene>
<keyword id="KW-0150">Chloroplast</keyword>
<keyword id="KW-0934">Plastid</keyword>
<keyword id="KW-0687">Ribonucleoprotein</keyword>
<keyword id="KW-0689">Ribosomal protein</keyword>
<keyword id="KW-0694">RNA-binding</keyword>
<keyword id="KW-0699">rRNA-binding</keyword>
<proteinExistence type="inferred from homology"/>
<evidence type="ECO:0000255" key="1">
    <source>
        <dbReference type="HAMAP-Rule" id="MF_00270"/>
    </source>
</evidence>
<evidence type="ECO:0000305" key="2"/>
<dbReference type="EMBL" id="AP009376">
    <property type="protein sequence ID" value="BAF50660.1"/>
    <property type="molecule type" value="Genomic_DNA"/>
</dbReference>
<dbReference type="RefSeq" id="YP_001123836.1">
    <property type="nucleotide sequence ID" value="NC_009275.1"/>
</dbReference>
<dbReference type="SMR" id="A4QLV5"/>
<dbReference type="GeneID" id="4962101"/>
<dbReference type="GO" id="GO:0009507">
    <property type="term" value="C:chloroplast"/>
    <property type="evidence" value="ECO:0007669"/>
    <property type="project" value="UniProtKB-SubCell"/>
</dbReference>
<dbReference type="GO" id="GO:0005763">
    <property type="term" value="C:mitochondrial small ribosomal subunit"/>
    <property type="evidence" value="ECO:0007669"/>
    <property type="project" value="TreeGrafter"/>
</dbReference>
<dbReference type="GO" id="GO:0070181">
    <property type="term" value="F:small ribosomal subunit rRNA binding"/>
    <property type="evidence" value="ECO:0007669"/>
    <property type="project" value="TreeGrafter"/>
</dbReference>
<dbReference type="GO" id="GO:0003735">
    <property type="term" value="F:structural constituent of ribosome"/>
    <property type="evidence" value="ECO:0007669"/>
    <property type="project" value="InterPro"/>
</dbReference>
<dbReference type="GO" id="GO:0006412">
    <property type="term" value="P:translation"/>
    <property type="evidence" value="ECO:0007669"/>
    <property type="project" value="UniProtKB-UniRule"/>
</dbReference>
<dbReference type="FunFam" id="4.10.640.10:FF:000002">
    <property type="entry name" value="30S ribosomal protein S18, chloroplastic"/>
    <property type="match status" value="1"/>
</dbReference>
<dbReference type="Gene3D" id="4.10.640.10">
    <property type="entry name" value="Ribosomal protein S18"/>
    <property type="match status" value="1"/>
</dbReference>
<dbReference type="HAMAP" id="MF_00270">
    <property type="entry name" value="Ribosomal_bS18"/>
    <property type="match status" value="1"/>
</dbReference>
<dbReference type="InterPro" id="IPR001648">
    <property type="entry name" value="Ribosomal_bS18"/>
</dbReference>
<dbReference type="InterPro" id="IPR018275">
    <property type="entry name" value="Ribosomal_bS18_CS"/>
</dbReference>
<dbReference type="InterPro" id="IPR036870">
    <property type="entry name" value="Ribosomal_bS18_sf"/>
</dbReference>
<dbReference type="NCBIfam" id="TIGR00165">
    <property type="entry name" value="S18"/>
    <property type="match status" value="1"/>
</dbReference>
<dbReference type="PANTHER" id="PTHR13479">
    <property type="entry name" value="30S RIBOSOMAL PROTEIN S18"/>
    <property type="match status" value="1"/>
</dbReference>
<dbReference type="PANTHER" id="PTHR13479:SF40">
    <property type="entry name" value="SMALL RIBOSOMAL SUBUNIT PROTEIN BS18M"/>
    <property type="match status" value="1"/>
</dbReference>
<dbReference type="Pfam" id="PF01084">
    <property type="entry name" value="Ribosomal_S18"/>
    <property type="match status" value="1"/>
</dbReference>
<dbReference type="PRINTS" id="PR00974">
    <property type="entry name" value="RIBOSOMALS18"/>
</dbReference>
<dbReference type="SUPFAM" id="SSF46911">
    <property type="entry name" value="Ribosomal protein S18"/>
    <property type="match status" value="1"/>
</dbReference>
<dbReference type="PROSITE" id="PS00057">
    <property type="entry name" value="RIBOSOMAL_S18"/>
    <property type="match status" value="1"/>
</dbReference>
<comment type="subunit">
    <text evidence="1">Part of the 30S ribosomal subunit.</text>
</comment>
<comment type="subcellular location">
    <subcellularLocation>
        <location>Plastid</location>
        <location>Chloroplast</location>
    </subcellularLocation>
</comment>
<comment type="similarity">
    <text evidence="1">Belongs to the bacterial ribosomal protein bS18 family.</text>
</comment>
<feature type="chain" id="PRO_0000345597" description="Small ribosomal subunit protein bS18c">
    <location>
        <begin position="1"/>
        <end position="101"/>
    </location>
</feature>
<geneLocation type="chloroplast"/>
<protein>
    <recommendedName>
        <fullName evidence="1">Small ribosomal subunit protein bS18c</fullName>
    </recommendedName>
    <alternativeName>
        <fullName evidence="2">30S ribosomal protein S18, chloroplastic</fullName>
    </alternativeName>
</protein>
<reference key="1">
    <citation type="submission" date="2007-03" db="EMBL/GenBank/DDBJ databases">
        <title>Sequencing analysis of Nasturtium officinale chloroplast DNA.</title>
        <authorList>
            <person name="Hosouchi T."/>
            <person name="Tsuruoka H."/>
            <person name="Kotani H."/>
        </authorList>
    </citation>
    <scope>NUCLEOTIDE SEQUENCE [LARGE SCALE GENOMIC DNA]</scope>
</reference>
<accession>A4QLV5</accession>
<organism>
    <name type="scientific">Nasturtium officinale</name>
    <name type="common">Watercress</name>
    <name type="synonym">Rorippa nasturtium-aquaticum</name>
    <dbReference type="NCBI Taxonomy" id="65948"/>
    <lineage>
        <taxon>Eukaryota</taxon>
        <taxon>Viridiplantae</taxon>
        <taxon>Streptophyta</taxon>
        <taxon>Embryophyta</taxon>
        <taxon>Tracheophyta</taxon>
        <taxon>Spermatophyta</taxon>
        <taxon>Magnoliopsida</taxon>
        <taxon>eudicotyledons</taxon>
        <taxon>Gunneridae</taxon>
        <taxon>Pentapetalae</taxon>
        <taxon>rosids</taxon>
        <taxon>malvids</taxon>
        <taxon>Brassicales</taxon>
        <taxon>Brassicaceae</taxon>
        <taxon>Cardamineae</taxon>
        <taxon>Nasturtium</taxon>
    </lineage>
</organism>